<protein>
    <recommendedName>
        <fullName evidence="1">tRNA uridine 5-carboxymethylaminomethyl modification enzyme MnmG</fullName>
    </recommendedName>
    <alternativeName>
        <fullName evidence="1">Glucose-inhibited division protein A</fullName>
    </alternativeName>
</protein>
<comment type="function">
    <text evidence="1">NAD-binding protein involved in the addition of a carboxymethylaminomethyl (cmnm) group at the wobble position (U34) of certain tRNAs, forming tRNA-cmnm(5)s(2)U34.</text>
</comment>
<comment type="cofactor">
    <cofactor evidence="1">
        <name>FAD</name>
        <dbReference type="ChEBI" id="CHEBI:57692"/>
    </cofactor>
</comment>
<comment type="subunit">
    <text evidence="1">Homodimer. Heterotetramer of two MnmE and two MnmG subunits.</text>
</comment>
<comment type="subcellular location">
    <subcellularLocation>
        <location evidence="1">Cytoplasm</location>
    </subcellularLocation>
</comment>
<comment type="similarity">
    <text evidence="1">Belongs to the MnmG family.</text>
</comment>
<proteinExistence type="inferred from homology"/>
<name>MNMG_MYCGE</name>
<keyword id="KW-0963">Cytoplasm</keyword>
<keyword id="KW-0274">FAD</keyword>
<keyword id="KW-0285">Flavoprotein</keyword>
<keyword id="KW-0520">NAD</keyword>
<keyword id="KW-1185">Reference proteome</keyword>
<keyword id="KW-0819">tRNA processing</keyword>
<sequence length="612" mass="68995">MSFIITVIGAGHAGLEAAFIVSKFNIKVNLLVLDINHLGSCPCNPSIGGPAKGIVTREIDVLGGMQAIAADNNALQYKLLNSSKGPAVQAIRAQIDKIGYKNWFQSQVKLNKNINLIQSEAINLIVRNEKIKGVILKDGSELLSDAVIITTGTYLRSKTYCGNTVKNQGPDQSKNSEKLSTNLINRGFKTIRLKTGTPPRILKTSLDYNQMELEINNNQNLAFSTTNKNFLPLEKQIPCYLVHTNQKIHDLILKNLKKSAMFNGSISAQGPLYCPSIEDKVFKFSQKPRHQIFVEPESLSLDTIYLAGLSTSFTPEIQKEIIQLLPGFQNAEIKKFGYAIEYDAFLSNQLKPTLETKLIENLYFAGQINGTSGYEEAAGQGLMAGINAALKLLKKPPFILQRNEAYIGVMINDLVTKTISDPYRLLTSRAEYRLWLRNDNVQERLIKKSFELGLTDKKTYELFLKKEKKKQELISFLKNTQVGKVKALKFTNKNTAQSLYDFNKRSEINLDKLIKDLPEKYQLDSETLKQIEIEIKYEGYIKKNEKYFKGLDKLSKIKIPHTFDYHKVKNLASEAIFKLSNFKPSNLAIASQIAGVNFNDIIAIKHFLKTYE</sequence>
<gene>
    <name evidence="1" type="primary">mnmG</name>
    <name evidence="1" type="synonym">gidA</name>
    <name type="ordered locus">MG379</name>
</gene>
<organism>
    <name type="scientific">Mycoplasma genitalium (strain ATCC 33530 / DSM 19775 / NCTC 10195 / G37)</name>
    <name type="common">Mycoplasmoides genitalium</name>
    <dbReference type="NCBI Taxonomy" id="243273"/>
    <lineage>
        <taxon>Bacteria</taxon>
        <taxon>Bacillati</taxon>
        <taxon>Mycoplasmatota</taxon>
        <taxon>Mycoplasmoidales</taxon>
        <taxon>Mycoplasmoidaceae</taxon>
        <taxon>Mycoplasmoides</taxon>
    </lineage>
</organism>
<dbReference type="EMBL" id="L43967">
    <property type="protein sequence ID" value="AAC71606.1"/>
    <property type="molecule type" value="Genomic_DNA"/>
</dbReference>
<dbReference type="EMBL" id="U01812">
    <property type="protein sequence ID" value="AAD12347.1"/>
    <property type="molecule type" value="Genomic_DNA"/>
</dbReference>
<dbReference type="PIR" id="I64241">
    <property type="entry name" value="I64241"/>
</dbReference>
<dbReference type="RefSeq" id="WP_010869458.1">
    <property type="nucleotide sequence ID" value="NC_000908.2"/>
</dbReference>
<dbReference type="SMR" id="P47619"/>
<dbReference type="FunCoup" id="P47619">
    <property type="interactions" value="205"/>
</dbReference>
<dbReference type="STRING" id="243273.MG_379"/>
<dbReference type="GeneID" id="88282562"/>
<dbReference type="KEGG" id="mge:MG_379"/>
<dbReference type="eggNOG" id="COG0445">
    <property type="taxonomic scope" value="Bacteria"/>
</dbReference>
<dbReference type="HOGENOM" id="CLU_007831_2_2_14"/>
<dbReference type="InParanoid" id="P47619"/>
<dbReference type="OrthoDB" id="9815560at2"/>
<dbReference type="BioCyc" id="MGEN243273:G1GJ2-473-MONOMER"/>
<dbReference type="Proteomes" id="UP000000807">
    <property type="component" value="Chromosome"/>
</dbReference>
<dbReference type="GO" id="GO:0005829">
    <property type="term" value="C:cytosol"/>
    <property type="evidence" value="ECO:0000318"/>
    <property type="project" value="GO_Central"/>
</dbReference>
<dbReference type="GO" id="GO:0050660">
    <property type="term" value="F:flavin adenine dinucleotide binding"/>
    <property type="evidence" value="ECO:0000318"/>
    <property type="project" value="GO_Central"/>
</dbReference>
<dbReference type="GO" id="GO:0030488">
    <property type="term" value="P:tRNA methylation"/>
    <property type="evidence" value="ECO:0000318"/>
    <property type="project" value="GO_Central"/>
</dbReference>
<dbReference type="GO" id="GO:0002098">
    <property type="term" value="P:tRNA wobble uridine modification"/>
    <property type="evidence" value="ECO:0000318"/>
    <property type="project" value="GO_Central"/>
</dbReference>
<dbReference type="FunFam" id="3.50.50.60:FF:000585">
    <property type="entry name" value="tRNA uridine 5-carboxymethylaminomethyl modification enzyme MnmG"/>
    <property type="match status" value="1"/>
</dbReference>
<dbReference type="Gene3D" id="3.50.50.60">
    <property type="entry name" value="FAD/NAD(P)-binding domain"/>
    <property type="match status" value="2"/>
</dbReference>
<dbReference type="Gene3D" id="1.10.150.570">
    <property type="entry name" value="GidA associated domain, C-terminal subdomain"/>
    <property type="match status" value="1"/>
</dbReference>
<dbReference type="Gene3D" id="1.10.10.1800">
    <property type="entry name" value="tRNA uridine 5-carboxymethylaminomethyl modification enzyme MnmG/GidA"/>
    <property type="match status" value="1"/>
</dbReference>
<dbReference type="HAMAP" id="MF_00129">
    <property type="entry name" value="MnmG_GidA"/>
    <property type="match status" value="1"/>
</dbReference>
<dbReference type="InterPro" id="IPR036188">
    <property type="entry name" value="FAD/NAD-bd_sf"/>
</dbReference>
<dbReference type="InterPro" id="IPR049312">
    <property type="entry name" value="GIDA_C_N"/>
</dbReference>
<dbReference type="InterPro" id="IPR004416">
    <property type="entry name" value="MnmG"/>
</dbReference>
<dbReference type="InterPro" id="IPR002218">
    <property type="entry name" value="MnmG-rel"/>
</dbReference>
<dbReference type="InterPro" id="IPR020595">
    <property type="entry name" value="MnmG-rel_CS"/>
</dbReference>
<dbReference type="InterPro" id="IPR026904">
    <property type="entry name" value="MnmG_C"/>
</dbReference>
<dbReference type="InterPro" id="IPR047001">
    <property type="entry name" value="MnmG_C_subdom"/>
</dbReference>
<dbReference type="InterPro" id="IPR044920">
    <property type="entry name" value="MnmG_C_subdom_sf"/>
</dbReference>
<dbReference type="InterPro" id="IPR040131">
    <property type="entry name" value="MnmG_N"/>
</dbReference>
<dbReference type="NCBIfam" id="TIGR00136">
    <property type="entry name" value="mnmG_gidA"/>
    <property type="match status" value="1"/>
</dbReference>
<dbReference type="PANTHER" id="PTHR11806">
    <property type="entry name" value="GLUCOSE INHIBITED DIVISION PROTEIN A"/>
    <property type="match status" value="1"/>
</dbReference>
<dbReference type="PANTHER" id="PTHR11806:SF0">
    <property type="entry name" value="PROTEIN MTO1 HOMOLOG, MITOCHONDRIAL"/>
    <property type="match status" value="1"/>
</dbReference>
<dbReference type="Pfam" id="PF01134">
    <property type="entry name" value="GIDA"/>
    <property type="match status" value="1"/>
</dbReference>
<dbReference type="Pfam" id="PF21680">
    <property type="entry name" value="GIDA_C_1st"/>
    <property type="match status" value="1"/>
</dbReference>
<dbReference type="Pfam" id="PF13932">
    <property type="entry name" value="SAM_GIDA_C"/>
    <property type="match status" value="1"/>
</dbReference>
<dbReference type="SMART" id="SM01228">
    <property type="entry name" value="GIDA_assoc_3"/>
    <property type="match status" value="1"/>
</dbReference>
<dbReference type="SUPFAM" id="SSF51905">
    <property type="entry name" value="FAD/NAD(P)-binding domain"/>
    <property type="match status" value="1"/>
</dbReference>
<dbReference type="PROSITE" id="PS01280">
    <property type="entry name" value="GIDA_1"/>
    <property type="match status" value="1"/>
</dbReference>
<dbReference type="PROSITE" id="PS01281">
    <property type="entry name" value="GIDA_2"/>
    <property type="match status" value="1"/>
</dbReference>
<feature type="chain" id="PRO_0000117132" description="tRNA uridine 5-carboxymethylaminomethyl modification enzyme MnmG">
    <location>
        <begin position="1"/>
        <end position="612"/>
    </location>
</feature>
<feature type="binding site" evidence="1">
    <location>
        <begin position="9"/>
        <end position="14"/>
    </location>
    <ligand>
        <name>FAD</name>
        <dbReference type="ChEBI" id="CHEBI:57692"/>
    </ligand>
</feature>
<feature type="binding site" evidence="1">
    <location>
        <begin position="270"/>
        <end position="284"/>
    </location>
    <ligand>
        <name>NAD(+)</name>
        <dbReference type="ChEBI" id="CHEBI:57540"/>
    </ligand>
</feature>
<reference key="1">
    <citation type="journal article" date="1995" name="Science">
        <title>The minimal gene complement of Mycoplasma genitalium.</title>
        <authorList>
            <person name="Fraser C.M."/>
            <person name="Gocayne J.D."/>
            <person name="White O."/>
            <person name="Adams M.D."/>
            <person name="Clayton R.A."/>
            <person name="Fleischmann R.D."/>
            <person name="Bult C.J."/>
            <person name="Kerlavage A.R."/>
            <person name="Sutton G.G."/>
            <person name="Kelley J.M."/>
            <person name="Fritchman J.L."/>
            <person name="Weidman J.F."/>
            <person name="Small K.V."/>
            <person name="Sandusky M."/>
            <person name="Fuhrmann J.L."/>
            <person name="Nguyen D.T."/>
            <person name="Utterback T.R."/>
            <person name="Saudek D.M."/>
            <person name="Phillips C.A."/>
            <person name="Merrick J.M."/>
            <person name="Tomb J.-F."/>
            <person name="Dougherty B.A."/>
            <person name="Bott K.F."/>
            <person name="Hu P.-C."/>
            <person name="Lucier T.S."/>
            <person name="Peterson S.N."/>
            <person name="Smith H.O."/>
            <person name="Hutchison C.A. III"/>
            <person name="Venter J.C."/>
        </authorList>
    </citation>
    <scope>NUCLEOTIDE SEQUENCE [LARGE SCALE GENOMIC DNA]</scope>
    <source>
        <strain>ATCC 33530 / DSM 19775 / NCTC 10195 / G37</strain>
    </source>
</reference>
<reference key="2">
    <citation type="journal article" date="1993" name="J. Bacteriol.">
        <title>A survey of the Mycoplasma genitalium genome by using random sequencing.</title>
        <authorList>
            <person name="Peterson S.N."/>
            <person name="Hu P.-C."/>
            <person name="Bott K.F."/>
            <person name="Hutchison C.A. III"/>
        </authorList>
    </citation>
    <scope>NUCLEOTIDE SEQUENCE [GENOMIC DNA] OF 301-394</scope>
    <source>
        <strain>ATCC 33530 / DSM 19775 / NCTC 10195 / G37</strain>
    </source>
</reference>
<accession>P47619</accession>
<evidence type="ECO:0000255" key="1">
    <source>
        <dbReference type="HAMAP-Rule" id="MF_00129"/>
    </source>
</evidence>